<evidence type="ECO:0000250" key="1">
    <source>
        <dbReference type="UniProtKB" id="P0CI24"/>
    </source>
</evidence>
<evidence type="ECO:0000269" key="2">
    <source>
    </source>
</evidence>
<evidence type="ECO:0000303" key="3">
    <source>
    </source>
</evidence>
<evidence type="ECO:0000305" key="4"/>
<evidence type="ECO:0000305" key="5">
    <source>
    </source>
</evidence>
<protein>
    <recommendedName>
        <fullName evidence="3">Conotoxin ar3d</fullName>
    </recommendedName>
</protein>
<comment type="subcellular location">
    <subcellularLocation>
        <location evidence="2">Secreted</location>
    </subcellularLocation>
</comment>
<comment type="tissue specificity">
    <text evidence="5">Expressed by the venom duct.</text>
</comment>
<comment type="domain">
    <text evidence="3">The cysteine framework is III (CC-C-C-CC). Classified in the M-2 branch, since 2 residues stand between the fourth and the fifth cysteine residues.</text>
</comment>
<comment type="mass spectrometry" mass="1742.5" method="MALDI" evidence="2"/>
<comment type="similarity">
    <text evidence="4">Belongs to the conotoxin M superfamily.</text>
</comment>
<keyword id="KW-0903">Direct protein sequencing</keyword>
<keyword id="KW-1015">Disulfide bond</keyword>
<keyword id="KW-0964">Secreted</keyword>
<keyword id="KW-0800">Toxin</keyword>
<proteinExistence type="evidence at protein level"/>
<dbReference type="GO" id="GO:0005576">
    <property type="term" value="C:extracellular region"/>
    <property type="evidence" value="ECO:0000314"/>
    <property type="project" value="UniProtKB"/>
</dbReference>
<dbReference type="GO" id="GO:0090729">
    <property type="term" value="F:toxin activity"/>
    <property type="evidence" value="ECO:0007669"/>
    <property type="project" value="UniProtKB-KW"/>
</dbReference>
<accession>C0HKY8</accession>
<reference key="1">
    <citation type="journal article" date="2015" name="Toxicon">
        <title>A sleep-inducing peptide from the venom of the Indian cone snail Conus araneosus.</title>
        <authorList>
            <person name="Franklin J.B."/>
            <person name="Rajesh R.P."/>
        </authorList>
    </citation>
    <scope>PROTEIN SEQUENCE</scope>
    <scope>SUBCELLULAR LOCATION</scope>
    <scope>MASS SPECTROMETRY</scope>
    <scope>IDENTIFICATION BY MASS SPECTROMETRY</scope>
    <source>
        <tissue>Venom</tissue>
    </source>
</reference>
<sequence length="16" mass="1750">CCDRIACRFGCVPCCT</sequence>
<organism>
    <name type="scientific">Conus araneosus</name>
    <name type="common">Cobweb cone</name>
    <dbReference type="NCBI Taxonomy" id="101286"/>
    <lineage>
        <taxon>Eukaryota</taxon>
        <taxon>Metazoa</taxon>
        <taxon>Spiralia</taxon>
        <taxon>Lophotrochozoa</taxon>
        <taxon>Mollusca</taxon>
        <taxon>Gastropoda</taxon>
        <taxon>Caenogastropoda</taxon>
        <taxon>Neogastropoda</taxon>
        <taxon>Conoidea</taxon>
        <taxon>Conidae</taxon>
        <taxon>Conus</taxon>
    </lineage>
</organism>
<name>M3D_CONAO</name>
<feature type="peptide" id="PRO_0000441664" description="Conotoxin ar3d" evidence="2">
    <location>
        <begin position="1"/>
        <end position="16"/>
    </location>
</feature>
<feature type="disulfide bond" evidence="1">
    <location>
        <begin position="1"/>
        <end position="15"/>
    </location>
</feature>
<feature type="disulfide bond" evidence="1">
    <location>
        <begin position="2"/>
        <end position="11"/>
    </location>
</feature>
<feature type="disulfide bond" evidence="1">
    <location>
        <begin position="7"/>
        <end position="14"/>
    </location>
</feature>
<feature type="unsure residue" description="I or L" evidence="5">
    <location>
        <position position="5"/>
    </location>
</feature>